<reference key="1">
    <citation type="journal article" date="2009" name="PLoS Biol.">
        <title>Lineage-specific biology revealed by a finished genome assembly of the mouse.</title>
        <authorList>
            <person name="Church D.M."/>
            <person name="Goodstadt L."/>
            <person name="Hillier L.W."/>
            <person name="Zody M.C."/>
            <person name="Goldstein S."/>
            <person name="She X."/>
            <person name="Bult C.J."/>
            <person name="Agarwala R."/>
            <person name="Cherry J.L."/>
            <person name="DiCuccio M."/>
            <person name="Hlavina W."/>
            <person name="Kapustin Y."/>
            <person name="Meric P."/>
            <person name="Maglott D."/>
            <person name="Birtle Z."/>
            <person name="Marques A.C."/>
            <person name="Graves T."/>
            <person name="Zhou S."/>
            <person name="Teague B."/>
            <person name="Potamousis K."/>
            <person name="Churas C."/>
            <person name="Place M."/>
            <person name="Herschleb J."/>
            <person name="Runnheim R."/>
            <person name="Forrest D."/>
            <person name="Amos-Landgraf J."/>
            <person name="Schwartz D.C."/>
            <person name="Cheng Z."/>
            <person name="Lindblad-Toh K."/>
            <person name="Eichler E.E."/>
            <person name="Ponting C.P."/>
        </authorList>
    </citation>
    <scope>NUCLEOTIDE SEQUENCE [LARGE SCALE GENOMIC DNA]</scope>
    <source>
        <strain>C57BL/6J</strain>
    </source>
</reference>
<reference key="2">
    <citation type="journal article" date="2013" name="Elife">
        <title>Multiple knockout mouse models reveal lincRNAs are required for life and brain development.</title>
        <authorList>
            <person name="Sauvageau M."/>
            <person name="Goff L.A."/>
            <person name="Lodato S."/>
            <person name="Bonev B."/>
            <person name="Groff A.F."/>
            <person name="Gerhardinger C."/>
            <person name="Sanchez-Gomez D.B."/>
            <person name="Hacisuleyman E."/>
            <person name="Li E."/>
            <person name="Spence M."/>
            <person name="Liapis S.C."/>
            <person name="Mallard W."/>
            <person name="Morse M."/>
            <person name="Swerdel M.R."/>
            <person name="D'Ecclessis M.F."/>
            <person name="Moore J.C."/>
            <person name="Lai V."/>
            <person name="Gong G."/>
            <person name="Yancopoulos G.D."/>
            <person name="Frendewey D."/>
            <person name="Kellis M."/>
            <person name="Hart R.P."/>
            <person name="Valenzuela D.M."/>
            <person name="Arlotta P."/>
            <person name="Rinn J.L."/>
        </authorList>
    </citation>
    <scope>DISRUPTION PHENOTYPE</scope>
</reference>
<comment type="subcellular location">
    <subcellularLocation>
        <location evidence="1">Membrane</location>
        <topology evidence="1">Single-pass type I membrane protein</topology>
    </subcellularLocation>
</comment>
<comment type="disruption phenotype">
    <text evidence="3">Homozygous mice have tremors and a propensity to develop spastic movements upon handling.</text>
</comment>
<organism>
    <name type="scientific">Mus musculus</name>
    <name type="common">Mouse</name>
    <dbReference type="NCBI Taxonomy" id="10090"/>
    <lineage>
        <taxon>Eukaryota</taxon>
        <taxon>Metazoa</taxon>
        <taxon>Chordata</taxon>
        <taxon>Craniata</taxon>
        <taxon>Vertebrata</taxon>
        <taxon>Euteleostomi</taxon>
        <taxon>Mammalia</taxon>
        <taxon>Eutheria</taxon>
        <taxon>Euarchontoglires</taxon>
        <taxon>Glires</taxon>
        <taxon>Rodentia</taxon>
        <taxon>Myomorpha</taxon>
        <taxon>Muroidea</taxon>
        <taxon>Muridae</taxon>
        <taxon>Murinae</taxon>
        <taxon>Mus</taxon>
        <taxon>Mus</taxon>
    </lineage>
</organism>
<keyword id="KW-0472">Membrane</keyword>
<keyword id="KW-1185">Reference proteome</keyword>
<keyword id="KW-0732">Signal</keyword>
<keyword id="KW-0812">Transmembrane</keyword>
<keyword id="KW-1133">Transmembrane helix</keyword>
<feature type="signal peptide" evidence="1">
    <location>
        <begin position="1"/>
        <end position="25"/>
    </location>
</feature>
<feature type="chain" id="PRO_0000458140" description="KANTR integral membrane protein" evidence="1">
    <location>
        <begin position="26"/>
        <end position="76"/>
    </location>
</feature>
<feature type="topological domain" description="Extracellular" evidence="2">
    <location>
        <begin position="26"/>
        <end position="34"/>
    </location>
</feature>
<feature type="transmembrane region" description="Helical" evidence="1">
    <location>
        <begin position="35"/>
        <end position="55"/>
    </location>
</feature>
<feature type="topological domain" description="Cytoplasmic" evidence="2">
    <location>
        <begin position="56"/>
        <end position="76"/>
    </location>
</feature>
<protein>
    <recommendedName>
        <fullName evidence="2">KANTR integral membrane protein</fullName>
    </recommendedName>
</protein>
<dbReference type="EMBL" id="AC140274">
    <property type="status" value="NOT_ANNOTATED_CDS"/>
    <property type="molecule type" value="Genomic_DNA"/>
</dbReference>
<dbReference type="SMR" id="A0A1W2P7I0"/>
<dbReference type="FunCoup" id="A0A1W2P7I0">
    <property type="interactions" value="1"/>
</dbReference>
<dbReference type="Ensembl" id="ENSMUST00000195280.3">
    <property type="protein sequence ID" value="ENSMUSP00000151626.2"/>
    <property type="gene ID" value="ENSMUSG00000087403.10"/>
</dbReference>
<dbReference type="AGR" id="MGI:1920247"/>
<dbReference type="MGI" id="MGI:1920247">
    <property type="gene designation" value="Kantr"/>
</dbReference>
<dbReference type="VEuPathDB" id="HostDB:ENSMUSG00000087403"/>
<dbReference type="GeneTree" id="ENSGT00980000198762"/>
<dbReference type="InParanoid" id="A0A1W2P7I0"/>
<dbReference type="OrthoDB" id="9633258at2759"/>
<dbReference type="ChiTaRS" id="Kantr">
    <property type="organism name" value="mouse"/>
</dbReference>
<dbReference type="PRO" id="PR:A0A1W2P7I0"/>
<dbReference type="Proteomes" id="UP000000589">
    <property type="component" value="Chromosome X"/>
</dbReference>
<dbReference type="RNAct" id="A0A1W2P7I0">
    <property type="molecule type" value="protein"/>
</dbReference>
<dbReference type="Bgee" id="ENSMUSG00000087403">
    <property type="expression patterns" value="Expressed in rostral migratory stream and 219 other cell types or tissues"/>
</dbReference>
<dbReference type="GO" id="GO:0016020">
    <property type="term" value="C:membrane"/>
    <property type="evidence" value="ECO:0007669"/>
    <property type="project" value="UniProtKB-SubCell"/>
</dbReference>
<accession>A0A1W2P7I0</accession>
<gene>
    <name evidence="4" type="primary">Kantr</name>
    <name type="synonym">Spasm</name>
</gene>
<name>KANTR_MOUSE</name>
<sequence length="76" mass="8522">MSPFSLLILVICAFSLFFLINLSRGLSILLVFTKNQLLALLLLSIVSLFSISLISALIFFDLLPSTFFGFILLLFF</sequence>
<proteinExistence type="inferred from homology"/>
<evidence type="ECO:0000255" key="1"/>
<evidence type="ECO:0000305" key="2"/>
<evidence type="ECO:0000305" key="3">
    <source>
    </source>
</evidence>
<evidence type="ECO:0000312" key="4">
    <source>
        <dbReference type="MGI" id="MGI:1920247"/>
    </source>
</evidence>